<accession>P60095</accession>
<accession>Q7M9W7</accession>
<reference key="1">
    <citation type="journal article" date="2003" name="Proc. Natl. Acad. Sci. U.S.A.">
        <title>Complete genome sequence and analysis of Wolinella succinogenes.</title>
        <authorList>
            <person name="Baar C."/>
            <person name="Eppinger M."/>
            <person name="Raddatz G."/>
            <person name="Simon J."/>
            <person name="Lanz C."/>
            <person name="Klimmek O."/>
            <person name="Nandakumar R."/>
            <person name="Gross R."/>
            <person name="Rosinus A."/>
            <person name="Keller H."/>
            <person name="Jagtap P."/>
            <person name="Linke B."/>
            <person name="Meyer F."/>
            <person name="Lederer H."/>
            <person name="Schuster S.C."/>
        </authorList>
    </citation>
    <scope>NUCLEOTIDE SEQUENCE [LARGE SCALE GENOMIC DNA]</scope>
    <source>
        <strain>ATCC 29543 / DSM 1740 / CCUG 13145 / JCM 31913 / LMG 7466 / NCTC 11488 / FDC 602W</strain>
    </source>
</reference>
<proteinExistence type="inferred from homology"/>
<comment type="function">
    <text evidence="1">Methylates ribosomal protein L11.</text>
</comment>
<comment type="catalytic activity">
    <reaction evidence="1">
        <text>L-lysyl-[protein] + 3 S-adenosyl-L-methionine = N(6),N(6),N(6)-trimethyl-L-lysyl-[protein] + 3 S-adenosyl-L-homocysteine + 3 H(+)</text>
        <dbReference type="Rhea" id="RHEA:54192"/>
        <dbReference type="Rhea" id="RHEA-COMP:9752"/>
        <dbReference type="Rhea" id="RHEA-COMP:13826"/>
        <dbReference type="ChEBI" id="CHEBI:15378"/>
        <dbReference type="ChEBI" id="CHEBI:29969"/>
        <dbReference type="ChEBI" id="CHEBI:57856"/>
        <dbReference type="ChEBI" id="CHEBI:59789"/>
        <dbReference type="ChEBI" id="CHEBI:61961"/>
    </reaction>
</comment>
<comment type="subcellular location">
    <subcellularLocation>
        <location evidence="1">Cytoplasm</location>
    </subcellularLocation>
</comment>
<comment type="similarity">
    <text evidence="1">Belongs to the methyltransferase superfamily. PrmA family.</text>
</comment>
<dbReference type="EC" id="2.1.1.-" evidence="1"/>
<dbReference type="EMBL" id="BX571658">
    <property type="protein sequence ID" value="CAE09751.1"/>
    <property type="molecule type" value="Genomic_DNA"/>
</dbReference>
<dbReference type="RefSeq" id="WP_011138551.1">
    <property type="nucleotide sequence ID" value="NC_005090.1"/>
</dbReference>
<dbReference type="SMR" id="P60095"/>
<dbReference type="STRING" id="273121.WS0620"/>
<dbReference type="KEGG" id="wsu:WS0620"/>
<dbReference type="eggNOG" id="COG2264">
    <property type="taxonomic scope" value="Bacteria"/>
</dbReference>
<dbReference type="HOGENOM" id="CLU_049382_1_0_7"/>
<dbReference type="Proteomes" id="UP000000422">
    <property type="component" value="Chromosome"/>
</dbReference>
<dbReference type="GO" id="GO:0005737">
    <property type="term" value="C:cytoplasm"/>
    <property type="evidence" value="ECO:0007669"/>
    <property type="project" value="UniProtKB-SubCell"/>
</dbReference>
<dbReference type="GO" id="GO:0016279">
    <property type="term" value="F:protein-lysine N-methyltransferase activity"/>
    <property type="evidence" value="ECO:0007669"/>
    <property type="project" value="RHEA"/>
</dbReference>
<dbReference type="GO" id="GO:0032259">
    <property type="term" value="P:methylation"/>
    <property type="evidence" value="ECO:0007669"/>
    <property type="project" value="UniProtKB-KW"/>
</dbReference>
<dbReference type="CDD" id="cd02440">
    <property type="entry name" value="AdoMet_MTases"/>
    <property type="match status" value="1"/>
</dbReference>
<dbReference type="Gene3D" id="3.40.50.150">
    <property type="entry name" value="Vaccinia Virus protein VP39"/>
    <property type="match status" value="1"/>
</dbReference>
<dbReference type="HAMAP" id="MF_00735">
    <property type="entry name" value="Methyltr_PrmA"/>
    <property type="match status" value="1"/>
</dbReference>
<dbReference type="InterPro" id="IPR050078">
    <property type="entry name" value="Ribosomal_L11_MeTrfase_PrmA"/>
</dbReference>
<dbReference type="InterPro" id="IPR004498">
    <property type="entry name" value="Ribosomal_PrmA_MeTrfase"/>
</dbReference>
<dbReference type="InterPro" id="IPR029063">
    <property type="entry name" value="SAM-dependent_MTases_sf"/>
</dbReference>
<dbReference type="NCBIfam" id="NF001786">
    <property type="entry name" value="PRK00517.2-4"/>
    <property type="match status" value="1"/>
</dbReference>
<dbReference type="PANTHER" id="PTHR43648">
    <property type="entry name" value="ELECTRON TRANSFER FLAVOPROTEIN BETA SUBUNIT LYSINE METHYLTRANSFERASE"/>
    <property type="match status" value="1"/>
</dbReference>
<dbReference type="PANTHER" id="PTHR43648:SF1">
    <property type="entry name" value="ELECTRON TRANSFER FLAVOPROTEIN BETA SUBUNIT LYSINE METHYLTRANSFERASE"/>
    <property type="match status" value="1"/>
</dbReference>
<dbReference type="Pfam" id="PF06325">
    <property type="entry name" value="PrmA"/>
    <property type="match status" value="1"/>
</dbReference>
<dbReference type="PIRSF" id="PIRSF000401">
    <property type="entry name" value="RPL11_MTase"/>
    <property type="match status" value="1"/>
</dbReference>
<dbReference type="SUPFAM" id="SSF53335">
    <property type="entry name" value="S-adenosyl-L-methionine-dependent methyltransferases"/>
    <property type="match status" value="1"/>
</dbReference>
<organism>
    <name type="scientific">Wolinella succinogenes (strain ATCC 29543 / DSM 1740 / CCUG 13145 / JCM 31913 / LMG 7466 / NCTC 11488 / FDC 602W)</name>
    <name type="common">Vibrio succinogenes</name>
    <dbReference type="NCBI Taxonomy" id="273121"/>
    <lineage>
        <taxon>Bacteria</taxon>
        <taxon>Pseudomonadati</taxon>
        <taxon>Campylobacterota</taxon>
        <taxon>Epsilonproteobacteria</taxon>
        <taxon>Campylobacterales</taxon>
        <taxon>Helicobacteraceae</taxon>
        <taxon>Wolinella</taxon>
    </lineage>
</organism>
<protein>
    <recommendedName>
        <fullName evidence="1">Ribosomal protein L11 methyltransferase</fullName>
        <shortName evidence="1">L11 Mtase</shortName>
        <ecNumber evidence="1">2.1.1.-</ecNumber>
    </recommendedName>
</protein>
<name>PRMA_WOLSU</name>
<evidence type="ECO:0000255" key="1">
    <source>
        <dbReference type="HAMAP-Rule" id="MF_00735"/>
    </source>
</evidence>
<gene>
    <name evidence="1" type="primary">prmA</name>
    <name type="ordered locus">WS0620</name>
</gene>
<feature type="chain" id="PRO_0000192334" description="Ribosomal protein L11 methyltransferase">
    <location>
        <begin position="1"/>
        <end position="275"/>
    </location>
</feature>
<feature type="binding site" evidence="1">
    <location>
        <position position="130"/>
    </location>
    <ligand>
        <name>S-adenosyl-L-methionine</name>
        <dbReference type="ChEBI" id="CHEBI:59789"/>
    </ligand>
</feature>
<feature type="binding site" evidence="1">
    <location>
        <position position="151"/>
    </location>
    <ligand>
        <name>S-adenosyl-L-methionine</name>
        <dbReference type="ChEBI" id="CHEBI:59789"/>
    </ligand>
</feature>
<feature type="binding site" evidence="1">
    <location>
        <position position="172"/>
    </location>
    <ligand>
        <name>S-adenosyl-L-methionine</name>
        <dbReference type="ChEBI" id="CHEBI:59789"/>
    </ligand>
</feature>
<feature type="binding site" evidence="1">
    <location>
        <position position="213"/>
    </location>
    <ligand>
        <name>S-adenosyl-L-methionine</name>
        <dbReference type="ChEBI" id="CHEBI:59789"/>
    </ligand>
</feature>
<sequence length="275" mass="30422">MGEFYHELTLSPSSYLELFSDFLLEATGEGIEEEGNSIIVRSDQDLSWLIEALQEFCQTLSARVSEEVNFSHSLTWKRNEDWIERYRQSIQPIECAPFYVRPSWHPPKPDLIDLLIDPALAFGSGHHGTTNGCLACLGALELEGKRVLDVGCGSGILAIASAKKGAIVEMCDTDELAVGEALKNASLNQVIASKVWIGSVGDAEGEYDLIIANILAAILIMLSPWLKERLKPGARLILSGILGPYKEDVLRKFGGFTLEKELLCEEWVTLQLRKN</sequence>
<keyword id="KW-0963">Cytoplasm</keyword>
<keyword id="KW-0489">Methyltransferase</keyword>
<keyword id="KW-1185">Reference proteome</keyword>
<keyword id="KW-0949">S-adenosyl-L-methionine</keyword>
<keyword id="KW-0808">Transferase</keyword>